<gene>
    <name type="primary">GPA1</name>
    <name type="synonym">GA1</name>
</gene>
<proteinExistence type="evidence at transcript level"/>
<keyword id="KW-0342">GTP-binding</keyword>
<keyword id="KW-0378">Hydrolase</keyword>
<keyword id="KW-0449">Lipoprotein</keyword>
<keyword id="KW-0460">Magnesium</keyword>
<keyword id="KW-0479">Metal-binding</keyword>
<keyword id="KW-0519">Myristate</keyword>
<keyword id="KW-0547">Nucleotide-binding</keyword>
<keyword id="KW-0564">Palmitate</keyword>
<keyword id="KW-0807">Transducer</keyword>
<dbReference type="EMBL" id="U97043">
    <property type="protein sequence ID" value="AAB57825.1"/>
    <property type="molecule type" value="mRNA"/>
</dbReference>
<dbReference type="SMR" id="O04278"/>
<dbReference type="GO" id="GO:0005737">
    <property type="term" value="C:cytoplasm"/>
    <property type="evidence" value="ECO:0007669"/>
    <property type="project" value="TreeGrafter"/>
</dbReference>
<dbReference type="GO" id="GO:0005834">
    <property type="term" value="C:heterotrimeric G-protein complex"/>
    <property type="evidence" value="ECO:0007669"/>
    <property type="project" value="InterPro"/>
</dbReference>
<dbReference type="GO" id="GO:0001664">
    <property type="term" value="F:G protein-coupled receptor binding"/>
    <property type="evidence" value="ECO:0007669"/>
    <property type="project" value="InterPro"/>
</dbReference>
<dbReference type="GO" id="GO:0031683">
    <property type="term" value="F:G-protein beta/gamma-subunit complex binding"/>
    <property type="evidence" value="ECO:0007669"/>
    <property type="project" value="InterPro"/>
</dbReference>
<dbReference type="GO" id="GO:0005525">
    <property type="term" value="F:GTP binding"/>
    <property type="evidence" value="ECO:0007669"/>
    <property type="project" value="UniProtKB-KW"/>
</dbReference>
<dbReference type="GO" id="GO:0003924">
    <property type="term" value="F:GTPase activity"/>
    <property type="evidence" value="ECO:0007669"/>
    <property type="project" value="InterPro"/>
</dbReference>
<dbReference type="GO" id="GO:0046872">
    <property type="term" value="F:metal ion binding"/>
    <property type="evidence" value="ECO:0007669"/>
    <property type="project" value="UniProtKB-KW"/>
</dbReference>
<dbReference type="GO" id="GO:0007188">
    <property type="term" value="P:adenylate cyclase-modulating G protein-coupled receptor signaling pathway"/>
    <property type="evidence" value="ECO:0007669"/>
    <property type="project" value="InterPro"/>
</dbReference>
<dbReference type="CDD" id="cd00066">
    <property type="entry name" value="G-alpha"/>
    <property type="match status" value="1"/>
</dbReference>
<dbReference type="FunFam" id="1.10.400.10:FF:000008">
    <property type="entry name" value="Guanine nucleotide-binding protein alpha-1 subunit"/>
    <property type="match status" value="1"/>
</dbReference>
<dbReference type="FunFam" id="3.40.50.300:FF:000733">
    <property type="entry name" value="Guanine nucleotide-binding protein alpha-1 subunit"/>
    <property type="match status" value="1"/>
</dbReference>
<dbReference type="Gene3D" id="1.10.400.10">
    <property type="entry name" value="GI Alpha 1, domain 2-like"/>
    <property type="match status" value="1"/>
</dbReference>
<dbReference type="Gene3D" id="3.40.50.300">
    <property type="entry name" value="P-loop containing nucleotide triphosphate hydrolases"/>
    <property type="match status" value="1"/>
</dbReference>
<dbReference type="InterPro" id="IPR001019">
    <property type="entry name" value="Gprotein_alpha_su"/>
</dbReference>
<dbReference type="InterPro" id="IPR011025">
    <property type="entry name" value="GproteinA_insert"/>
</dbReference>
<dbReference type="InterPro" id="IPR027417">
    <property type="entry name" value="P-loop_NTPase"/>
</dbReference>
<dbReference type="InterPro" id="IPR002976">
    <property type="entry name" value="Plant_Gprotein_alpha"/>
</dbReference>
<dbReference type="PANTHER" id="PTHR10218">
    <property type="entry name" value="GTP-BINDING PROTEIN ALPHA SUBUNIT"/>
    <property type="match status" value="1"/>
</dbReference>
<dbReference type="PANTHER" id="PTHR10218:SF343">
    <property type="entry name" value="GUANINE NUCLEOTIDE-BINDING PROTEIN ALPHA-2 SUBUNIT"/>
    <property type="match status" value="1"/>
</dbReference>
<dbReference type="Pfam" id="PF00503">
    <property type="entry name" value="G-alpha"/>
    <property type="match status" value="1"/>
</dbReference>
<dbReference type="PRINTS" id="PR00318">
    <property type="entry name" value="GPROTEINA"/>
</dbReference>
<dbReference type="PRINTS" id="PR01242">
    <property type="entry name" value="GPROTEINAPLT"/>
</dbReference>
<dbReference type="SMART" id="SM00275">
    <property type="entry name" value="G_alpha"/>
    <property type="match status" value="1"/>
</dbReference>
<dbReference type="SUPFAM" id="SSF52540">
    <property type="entry name" value="P-loop containing nucleoside triphosphate hydrolases"/>
    <property type="match status" value="1"/>
</dbReference>
<dbReference type="SUPFAM" id="SSF47895">
    <property type="entry name" value="Transducin (alpha subunit), insertion domain"/>
    <property type="match status" value="1"/>
</dbReference>
<dbReference type="PROSITE" id="PS51882">
    <property type="entry name" value="G_ALPHA"/>
    <property type="match status" value="1"/>
</dbReference>
<sequence length="384" mass="44700">MGLLCSKSNRYNDAKAEENAQTAEIERRIELETKAEKHIRKLLLLGAGESGKSTIFKQIKLLFQTGFDEAELKSYLPVVHANVYQTIKLLHDGSKEFAQNDVDFSKYVISTENKDIGEKLSEIGGRLDYPRLTKELAQEIESIWKDAAIQETYARGNELQVPDCTHYFMENLQRLSDANYVPTKEDVLLARVRTTGVVEIQFSPVGENKKSGEVYRLFDVGGQRNERRKWIHLFEGVSAVIFCVAISEYDQTLFEDENKNRMMETKELFEWVLKQQCFEKTSFMLFLNKFDIFEKKILDVPLNVCEWFKDYQPVSTGKQEIEHAYEFVKKKFEESYFQSTAPDSVDRVFKIYRTTALDQKVVKKTFKLVDETLRRRNLFEAGLL</sequence>
<protein>
    <recommendedName>
        <fullName>Guanine nucleotide-binding protein alpha-1 subunit</fullName>
        <shortName>GP-alpha-1</shortName>
    </recommendedName>
</protein>
<evidence type="ECO:0000250" key="1"/>
<evidence type="ECO:0000250" key="2">
    <source>
        <dbReference type="UniProtKB" id="P18064"/>
    </source>
</evidence>
<evidence type="ECO:0000255" key="3">
    <source>
        <dbReference type="PROSITE-ProRule" id="PRU01230"/>
    </source>
</evidence>
<evidence type="ECO:0000305" key="4"/>
<name>GPA1_PEA</name>
<feature type="initiator methionine" description="Removed" evidence="1">
    <location>
        <position position="1"/>
    </location>
</feature>
<feature type="chain" id="PRO_0000203623" description="Guanine nucleotide-binding protein alpha-1 subunit">
    <location>
        <begin position="2"/>
        <end position="384"/>
    </location>
</feature>
<feature type="domain" description="G-alpha" evidence="3">
    <location>
        <begin position="38"/>
        <end position="384"/>
    </location>
</feature>
<feature type="region of interest" description="G1 motif" evidence="3">
    <location>
        <begin position="41"/>
        <end position="54"/>
    </location>
</feature>
<feature type="region of interest" description="G2 motif" evidence="3">
    <location>
        <begin position="186"/>
        <end position="194"/>
    </location>
</feature>
<feature type="region of interest" description="G3 motif" evidence="3">
    <location>
        <begin position="215"/>
        <end position="224"/>
    </location>
</feature>
<feature type="region of interest" description="G4 motif" evidence="3">
    <location>
        <begin position="284"/>
        <end position="291"/>
    </location>
</feature>
<feature type="region of interest" description="G5 motif" evidence="3">
    <location>
        <begin position="354"/>
        <end position="359"/>
    </location>
</feature>
<feature type="binding site" evidence="2">
    <location>
        <position position="49"/>
    </location>
    <ligand>
        <name>GTP</name>
        <dbReference type="ChEBI" id="CHEBI:37565"/>
    </ligand>
</feature>
<feature type="binding site" evidence="2">
    <location>
        <position position="50"/>
    </location>
    <ligand>
        <name>GTP</name>
        <dbReference type="ChEBI" id="CHEBI:37565"/>
    </ligand>
</feature>
<feature type="binding site" evidence="2">
    <location>
        <position position="51"/>
    </location>
    <ligand>
        <name>GTP</name>
        <dbReference type="ChEBI" id="CHEBI:37565"/>
    </ligand>
</feature>
<feature type="binding site" evidence="2">
    <location>
        <position position="52"/>
    </location>
    <ligand>
        <name>GTP</name>
        <dbReference type="ChEBI" id="CHEBI:37565"/>
    </ligand>
</feature>
<feature type="binding site" evidence="2">
    <location>
        <position position="53"/>
    </location>
    <ligand>
        <name>GTP</name>
        <dbReference type="ChEBI" id="CHEBI:37565"/>
    </ligand>
</feature>
<feature type="binding site" evidence="2">
    <location>
        <position position="53"/>
    </location>
    <ligand>
        <name>Mg(2+)</name>
        <dbReference type="ChEBI" id="CHEBI:18420"/>
    </ligand>
</feature>
<feature type="binding site" evidence="2">
    <location>
        <position position="54"/>
    </location>
    <ligand>
        <name>GTP</name>
        <dbReference type="ChEBI" id="CHEBI:37565"/>
    </ligand>
</feature>
<feature type="binding site" evidence="2">
    <location>
        <position position="163"/>
    </location>
    <ligand>
        <name>GTP</name>
        <dbReference type="ChEBI" id="CHEBI:37565"/>
    </ligand>
</feature>
<feature type="binding site" evidence="2">
    <location>
        <position position="188"/>
    </location>
    <ligand>
        <name>GTP</name>
        <dbReference type="ChEBI" id="CHEBI:37565"/>
    </ligand>
</feature>
<feature type="binding site" evidence="2">
    <location>
        <position position="194"/>
    </location>
    <ligand>
        <name>GTP</name>
        <dbReference type="ChEBI" id="CHEBI:37565"/>
    </ligand>
</feature>
<feature type="binding site" evidence="2">
    <location>
        <position position="194"/>
    </location>
    <ligand>
        <name>Mg(2+)</name>
        <dbReference type="ChEBI" id="CHEBI:18420"/>
    </ligand>
</feature>
<feature type="binding site" evidence="2">
    <location>
        <position position="222"/>
    </location>
    <ligand>
        <name>GTP</name>
        <dbReference type="ChEBI" id="CHEBI:37565"/>
    </ligand>
</feature>
<feature type="binding site" evidence="2">
    <location>
        <position position="288"/>
    </location>
    <ligand>
        <name>GTP</name>
        <dbReference type="ChEBI" id="CHEBI:37565"/>
    </ligand>
</feature>
<feature type="binding site" evidence="2">
    <location>
        <position position="289"/>
    </location>
    <ligand>
        <name>GTP</name>
        <dbReference type="ChEBI" id="CHEBI:37565"/>
    </ligand>
</feature>
<feature type="binding site" evidence="2">
    <location>
        <position position="291"/>
    </location>
    <ligand>
        <name>GTP</name>
        <dbReference type="ChEBI" id="CHEBI:37565"/>
    </ligand>
</feature>
<feature type="binding site" evidence="2">
    <location>
        <position position="356"/>
    </location>
    <ligand>
        <name>GTP</name>
        <dbReference type="ChEBI" id="CHEBI:37565"/>
    </ligand>
</feature>
<feature type="lipid moiety-binding region" description="N-myristoyl glycine" evidence="2">
    <location>
        <position position="2"/>
    </location>
</feature>
<feature type="lipid moiety-binding region" description="S-palmitoyl cysteine" evidence="2">
    <location>
        <position position="5"/>
    </location>
</feature>
<reference key="1">
    <citation type="journal article" date="1999" name="Plant J.">
        <title>Cloning and characterisation of PGA1 and PGA2: two G protein alpha-subunits from pea that promote growth in the yeast Saccharomyces cerevisiae.</title>
        <authorList>
            <person name="Marsh J.F. III"/>
            <person name="Kaufman L.S."/>
        </authorList>
    </citation>
    <scope>NUCLEOTIDE SEQUENCE [MRNA]</scope>
    <source>
        <strain>cv. Alaska</strain>
        <tissue>Apical bud</tissue>
    </source>
</reference>
<accession>O04278</accession>
<organism>
    <name type="scientific">Pisum sativum</name>
    <name type="common">Garden pea</name>
    <name type="synonym">Lathyrus oleraceus</name>
    <dbReference type="NCBI Taxonomy" id="3888"/>
    <lineage>
        <taxon>Eukaryota</taxon>
        <taxon>Viridiplantae</taxon>
        <taxon>Streptophyta</taxon>
        <taxon>Embryophyta</taxon>
        <taxon>Tracheophyta</taxon>
        <taxon>Spermatophyta</taxon>
        <taxon>Magnoliopsida</taxon>
        <taxon>eudicotyledons</taxon>
        <taxon>Gunneridae</taxon>
        <taxon>Pentapetalae</taxon>
        <taxon>rosids</taxon>
        <taxon>fabids</taxon>
        <taxon>Fabales</taxon>
        <taxon>Fabaceae</taxon>
        <taxon>Papilionoideae</taxon>
        <taxon>50 kb inversion clade</taxon>
        <taxon>NPAAA clade</taxon>
        <taxon>Hologalegina</taxon>
        <taxon>IRL clade</taxon>
        <taxon>Fabeae</taxon>
        <taxon>Pisum</taxon>
    </lineage>
</organism>
<comment type="function">
    <text>Guanine nucleotide-binding proteins (G proteins) are involved as modulators or transducers in various transmembrane signaling systems.</text>
</comment>
<comment type="cofactor">
    <cofactor evidence="2">
        <name>Mg(2+)</name>
        <dbReference type="ChEBI" id="CHEBI:18420"/>
    </cofactor>
</comment>
<comment type="subunit">
    <text>G proteins are composed of 3 units; alpha, beta and gamma. The alpha chain contains the guanine nucleotide binding site.</text>
</comment>
<comment type="domain">
    <text evidence="1">The helical domain (69-189) is required for self-activation.</text>
</comment>
<comment type="similarity">
    <text evidence="4">Belongs to the G-alpha family.</text>
</comment>